<comment type="catalytic activity">
    <reaction>
        <text>L-aspartate + L-glutamine + ATP + H2O = L-asparagine + L-glutamate + AMP + diphosphate + H(+)</text>
        <dbReference type="Rhea" id="RHEA:12228"/>
        <dbReference type="ChEBI" id="CHEBI:15377"/>
        <dbReference type="ChEBI" id="CHEBI:15378"/>
        <dbReference type="ChEBI" id="CHEBI:29985"/>
        <dbReference type="ChEBI" id="CHEBI:29991"/>
        <dbReference type="ChEBI" id="CHEBI:30616"/>
        <dbReference type="ChEBI" id="CHEBI:33019"/>
        <dbReference type="ChEBI" id="CHEBI:58048"/>
        <dbReference type="ChEBI" id="CHEBI:58359"/>
        <dbReference type="ChEBI" id="CHEBI:456215"/>
        <dbReference type="EC" id="6.3.5.4"/>
    </reaction>
</comment>
<comment type="pathway">
    <text>Amino-acid biosynthesis; L-asparagine biosynthesis; L-asparagine from L-aspartate (L-Gln route): step 1/1.</text>
</comment>
<proteinExistence type="evidence at transcript level"/>
<name>ASNS_CRIGR</name>
<keyword id="KW-0007">Acetylation</keyword>
<keyword id="KW-0028">Amino-acid biosynthesis</keyword>
<keyword id="KW-0061">Asparagine biosynthesis</keyword>
<keyword id="KW-0067">ATP-binding</keyword>
<keyword id="KW-0315">Glutamine amidotransferase</keyword>
<keyword id="KW-0436">Ligase</keyword>
<keyword id="KW-0547">Nucleotide-binding</keyword>
<keyword id="KW-0597">Phosphoprotein</keyword>
<protein>
    <recommendedName>
        <fullName>Asparagine synthetase [glutamine-hydrolyzing]</fullName>
        <ecNumber>6.3.5.4</ecNumber>
    </recommendedName>
    <alternativeName>
        <fullName>Glutamine-dependent asparagine synthetase</fullName>
    </alternativeName>
</protein>
<sequence>MCGIWALFGSDDCLSVQCLSAMKIAHRGPDAFRFENVNGYTNCCFGFHRLAVVDPLFGMQPIRVKKYPYLWLCYNGEIYNHKALQQRFEFEYQTNVDGEIILHLYDKGGIEQTICMLDGVFAFILLDTANKKVFLGRDTYGVRPLFKAMTEDGFLAVCSEAKGLVSLKHSTTPFLKVEPFLPGHYEVLDLKPNGKVASVEMVKYHHCRDEPLHALYDSVEKLFQGFELETVKSNLRILFDSAVRKRLMTDRRIGCLLSGGLDSSLVAASLLKQLKEAQVQYPLQTFAIGMEDSPDLLAARKVANYIGSEHHEVLFNSEEGIQALDEVIFSLETYDITTVRASVGMYLISKYIRKNTDSVVIFSGEGSDELTQGYIYFHKAPSPEKAEEESERLLKELYLFDVLRADRTTAAHGLELRVPFLDHRFSSYYLSLPPEMRIPKNGIEKHLLRETFEDSNLLPKEILWRPKEAFSDGITSVKNSWFKILQDYVEHQVDDEMMATAAQKFPFNTPKTKEGYYYRQIFERHYPGRADWLTHYWMPKWINATDPSARTLTHYKSAAKA</sequence>
<gene>
    <name type="primary">ASNS</name>
    <name type="synonym">AS</name>
</gene>
<evidence type="ECO:0000250" key="1"/>
<evidence type="ECO:0000250" key="2">
    <source>
        <dbReference type="UniProtKB" id="P08243"/>
    </source>
</evidence>
<evidence type="ECO:0000255" key="3">
    <source>
        <dbReference type="PROSITE-ProRule" id="PRU00609"/>
    </source>
</evidence>
<organism>
    <name type="scientific">Cricetulus griseus</name>
    <name type="common">Chinese hamster</name>
    <name type="synonym">Cricetulus barabensis griseus</name>
    <dbReference type="NCBI Taxonomy" id="10029"/>
    <lineage>
        <taxon>Eukaryota</taxon>
        <taxon>Metazoa</taxon>
        <taxon>Chordata</taxon>
        <taxon>Craniata</taxon>
        <taxon>Vertebrata</taxon>
        <taxon>Euteleostomi</taxon>
        <taxon>Mammalia</taxon>
        <taxon>Eutheria</taxon>
        <taxon>Euarchontoglires</taxon>
        <taxon>Glires</taxon>
        <taxon>Rodentia</taxon>
        <taxon>Myomorpha</taxon>
        <taxon>Muroidea</taxon>
        <taxon>Cricetidae</taxon>
        <taxon>Cricetinae</taxon>
        <taxon>Cricetulus</taxon>
    </lineage>
</organism>
<accession>P19891</accession>
<accession>Q6LBT9</accession>
<dbReference type="EC" id="6.3.5.4"/>
<dbReference type="EMBL" id="M27838">
    <property type="protein sequence ID" value="AAA36977.1"/>
    <property type="molecule type" value="mRNA"/>
</dbReference>
<dbReference type="EMBL" id="X12950">
    <property type="protein sequence ID" value="CAA31409.1"/>
    <property type="molecule type" value="mRNA"/>
</dbReference>
<dbReference type="PIR" id="JS0273">
    <property type="entry name" value="AJHYNC"/>
</dbReference>
<dbReference type="RefSeq" id="XP_003509834.1">
    <property type="nucleotide sequence ID" value="XM_003509786.3"/>
</dbReference>
<dbReference type="RefSeq" id="XP_003509835.1">
    <property type="nucleotide sequence ID" value="XM_003509787.3"/>
</dbReference>
<dbReference type="RefSeq" id="XP_007630216.1">
    <property type="nucleotide sequence ID" value="XM_007632026.2"/>
</dbReference>
<dbReference type="RefSeq" id="XP_007630217.1">
    <property type="nucleotide sequence ID" value="XM_007632027.2"/>
</dbReference>
<dbReference type="SMR" id="P19891"/>
<dbReference type="MEROPS" id="C44.974"/>
<dbReference type="PaxDb" id="10029-XP_007630216.1"/>
<dbReference type="Ensembl" id="ENSCGRT00001018823.1">
    <property type="protein sequence ID" value="ENSCGRP00001014586.1"/>
    <property type="gene ID" value="ENSCGRG00001015428.1"/>
</dbReference>
<dbReference type="GeneID" id="100760225"/>
<dbReference type="CTD" id="440"/>
<dbReference type="eggNOG" id="KOG0571">
    <property type="taxonomic scope" value="Eukaryota"/>
</dbReference>
<dbReference type="GeneTree" id="ENSGT00390000001994"/>
<dbReference type="OMA" id="HYLNFHA"/>
<dbReference type="OrthoDB" id="409189at2759"/>
<dbReference type="UniPathway" id="UPA00134">
    <property type="reaction ID" value="UER00195"/>
</dbReference>
<dbReference type="Proteomes" id="UP000694386">
    <property type="component" value="Unplaced"/>
</dbReference>
<dbReference type="Proteomes" id="UP001108280">
    <property type="component" value="Unplaced"/>
</dbReference>
<dbReference type="GO" id="GO:0005829">
    <property type="term" value="C:cytosol"/>
    <property type="evidence" value="ECO:0007669"/>
    <property type="project" value="Ensembl"/>
</dbReference>
<dbReference type="GO" id="GO:0004066">
    <property type="term" value="F:asparagine synthase (glutamine-hydrolyzing) activity"/>
    <property type="evidence" value="ECO:0007669"/>
    <property type="project" value="UniProtKB-EC"/>
</dbReference>
<dbReference type="GO" id="GO:0005524">
    <property type="term" value="F:ATP binding"/>
    <property type="evidence" value="ECO:0007669"/>
    <property type="project" value="UniProtKB-KW"/>
</dbReference>
<dbReference type="GO" id="GO:0042149">
    <property type="term" value="P:cellular response to glucose starvation"/>
    <property type="evidence" value="ECO:0007669"/>
    <property type="project" value="Ensembl"/>
</dbReference>
<dbReference type="GO" id="GO:0070981">
    <property type="term" value="P:L-asparagine biosynthetic process"/>
    <property type="evidence" value="ECO:0007669"/>
    <property type="project" value="UniProtKB-UniPathway"/>
</dbReference>
<dbReference type="GO" id="GO:0043066">
    <property type="term" value="P:negative regulation of apoptotic process"/>
    <property type="evidence" value="ECO:0007669"/>
    <property type="project" value="Ensembl"/>
</dbReference>
<dbReference type="GO" id="GO:0045931">
    <property type="term" value="P:positive regulation of mitotic cell cycle"/>
    <property type="evidence" value="ECO:0007669"/>
    <property type="project" value="Ensembl"/>
</dbReference>
<dbReference type="CDD" id="cd01991">
    <property type="entry name" value="Asn_synthase_B_C"/>
    <property type="match status" value="1"/>
</dbReference>
<dbReference type="CDD" id="cd00712">
    <property type="entry name" value="AsnB"/>
    <property type="match status" value="1"/>
</dbReference>
<dbReference type="FunFam" id="3.60.20.10:FF:000039">
    <property type="entry name" value="Asparagine synthetase [glutamine-hydrolyzing]"/>
    <property type="match status" value="1"/>
</dbReference>
<dbReference type="FunFam" id="3.40.50.620:FF:000090">
    <property type="entry name" value="asparagine synthetase [glutamine-hydrolyzing]"/>
    <property type="match status" value="1"/>
</dbReference>
<dbReference type="Gene3D" id="3.60.20.10">
    <property type="entry name" value="Glutamine Phosphoribosylpyrophosphate, subunit 1, domain 1"/>
    <property type="match status" value="1"/>
</dbReference>
<dbReference type="Gene3D" id="3.40.50.620">
    <property type="entry name" value="HUPs"/>
    <property type="match status" value="1"/>
</dbReference>
<dbReference type="InterPro" id="IPR006426">
    <property type="entry name" value="Asn_synth_AEB"/>
</dbReference>
<dbReference type="InterPro" id="IPR001962">
    <property type="entry name" value="Asn_synthase"/>
</dbReference>
<dbReference type="InterPro" id="IPR050795">
    <property type="entry name" value="Asn_Synthetase"/>
</dbReference>
<dbReference type="InterPro" id="IPR033738">
    <property type="entry name" value="AsnB_N"/>
</dbReference>
<dbReference type="InterPro" id="IPR017932">
    <property type="entry name" value="GATase_2_dom"/>
</dbReference>
<dbReference type="InterPro" id="IPR029055">
    <property type="entry name" value="Ntn_hydrolases_N"/>
</dbReference>
<dbReference type="InterPro" id="IPR014729">
    <property type="entry name" value="Rossmann-like_a/b/a_fold"/>
</dbReference>
<dbReference type="NCBIfam" id="TIGR01536">
    <property type="entry name" value="asn_synth_AEB"/>
    <property type="match status" value="1"/>
</dbReference>
<dbReference type="NCBIfam" id="NF006949">
    <property type="entry name" value="PRK09431.1"/>
    <property type="match status" value="1"/>
</dbReference>
<dbReference type="PANTHER" id="PTHR11772">
    <property type="entry name" value="ASPARAGINE SYNTHETASE"/>
    <property type="match status" value="1"/>
</dbReference>
<dbReference type="PANTHER" id="PTHR11772:SF23">
    <property type="entry name" value="ASPARAGINE SYNTHETASE [GLUTAMINE-HYDROLYZING]"/>
    <property type="match status" value="1"/>
</dbReference>
<dbReference type="Pfam" id="PF00733">
    <property type="entry name" value="Asn_synthase"/>
    <property type="match status" value="2"/>
</dbReference>
<dbReference type="Pfam" id="PF13537">
    <property type="entry name" value="GATase_7"/>
    <property type="match status" value="1"/>
</dbReference>
<dbReference type="PIRSF" id="PIRSF001589">
    <property type="entry name" value="Asn_synthetase_glu-h"/>
    <property type="match status" value="1"/>
</dbReference>
<dbReference type="SUPFAM" id="SSF52402">
    <property type="entry name" value="Adenine nucleotide alpha hydrolases-like"/>
    <property type="match status" value="1"/>
</dbReference>
<dbReference type="SUPFAM" id="SSF56235">
    <property type="entry name" value="N-terminal nucleophile aminohydrolases (Ntn hydrolases)"/>
    <property type="match status" value="1"/>
</dbReference>
<dbReference type="PROSITE" id="PS51278">
    <property type="entry name" value="GATASE_TYPE_2"/>
    <property type="match status" value="1"/>
</dbReference>
<feature type="initiator methionine" description="Removed" evidence="1">
    <location>
        <position position="1"/>
    </location>
</feature>
<feature type="chain" id="PRO_0000056909" description="Asparagine synthetase [glutamine-hydrolyzing]">
    <location>
        <begin position="2"/>
        <end position="561"/>
    </location>
</feature>
<feature type="domain" description="Glutamine amidotransferase type-2" evidence="3">
    <location>
        <begin position="2"/>
        <end position="191"/>
    </location>
</feature>
<feature type="domain" description="Asparagine synthetase">
    <location>
        <begin position="213"/>
        <end position="536"/>
    </location>
</feature>
<feature type="active site" description="For GATase activity" evidence="1">
    <location>
        <position position="2"/>
    </location>
</feature>
<feature type="binding site" evidence="1">
    <location>
        <begin position="49"/>
        <end position="53"/>
    </location>
    <ligand>
        <name>L-glutamine</name>
        <dbReference type="ChEBI" id="CHEBI:58359"/>
    </ligand>
</feature>
<feature type="binding site" evidence="1">
    <location>
        <begin position="75"/>
        <end position="77"/>
    </location>
    <ligand>
        <name>L-glutamine</name>
        <dbReference type="ChEBI" id="CHEBI:58359"/>
    </ligand>
</feature>
<feature type="binding site" evidence="1">
    <location>
        <position position="97"/>
    </location>
    <ligand>
        <name>L-glutamine</name>
        <dbReference type="ChEBI" id="CHEBI:58359"/>
    </ligand>
</feature>
<feature type="binding site" evidence="1">
    <location>
        <position position="256"/>
    </location>
    <ligand>
        <name>ATP</name>
        <dbReference type="ChEBI" id="CHEBI:30616"/>
    </ligand>
</feature>
<feature type="binding site" evidence="1">
    <location>
        <position position="288"/>
    </location>
    <ligand>
        <name>ATP</name>
        <dbReference type="ChEBI" id="CHEBI:30616"/>
    </ligand>
</feature>
<feature type="binding site" evidence="1">
    <location>
        <begin position="363"/>
        <end position="364"/>
    </location>
    <ligand>
        <name>ATP</name>
        <dbReference type="ChEBI" id="CHEBI:30616"/>
    </ligand>
</feature>
<feature type="site" description="Important for beta-aspartyl-AMP intermediate formation" evidence="1">
    <location>
        <position position="365"/>
    </location>
</feature>
<feature type="modified residue" description="N6-acetyllysine" evidence="2">
    <location>
        <position position="385"/>
    </location>
</feature>
<feature type="modified residue" description="Phosphothreonine" evidence="2">
    <location>
        <position position="545"/>
    </location>
</feature>
<feature type="modified residue" description="Phosphoserine" evidence="2">
    <location>
        <position position="557"/>
    </location>
</feature>
<reference key="1">
    <citation type="journal article" date="1989" name="Gene">
        <title>Fine structure analysis of the Chinese hamster AS gene encoding asparagine synthetase.</title>
        <authorList>
            <person name="Andrulis I.L."/>
            <person name="Shotwell M."/>
            <person name="Evans-Blackler S."/>
            <person name="Zalkin H."/>
            <person name="Siminovitch L."/>
            <person name="Ray P.N."/>
        </authorList>
    </citation>
    <scope>NUCLEOTIDE SEQUENCE [MRNA]</scope>
    <source>
        <tissue>Ovary</tissue>
    </source>
</reference>